<organism>
    <name type="scientific">Bordetella pertussis (strain Tohama I / ATCC BAA-589 / NCTC 13251)</name>
    <dbReference type="NCBI Taxonomy" id="257313"/>
    <lineage>
        <taxon>Bacteria</taxon>
        <taxon>Pseudomonadati</taxon>
        <taxon>Pseudomonadota</taxon>
        <taxon>Betaproteobacteria</taxon>
        <taxon>Burkholderiales</taxon>
        <taxon>Alcaligenaceae</taxon>
        <taxon>Bordetella</taxon>
    </lineage>
</organism>
<sequence>MVSLLKKLIGSRNDRLLKEYRKQVAQINSLEPKISALSDEELSAKTQEFRDRHQQGTSLDDLLPEAFAVVREAGKRVFGMRHFDVQMLGGIALHNGKIAEMRTGEGKTLMATLPVYLNAIAGKGVHVVTVNDYLARRDAEWMGRLYRFLGMSTGVVVPQQPNDEKIAAYAADITYGTNNEFGFDYLRDNMEYRVEDRRQRRLFYAIVDEVDSILIDEARTPLIISGQAEDHTELYVRMNAVPPLLKRMASEPKPHEPEPEGDYWVDEKSQQVYMSEAGHESAEKILTRVGLLPEGESLYDPRHIALMHHMMVALRAHTLFFRDQQYVVQDDEVVIVDEFTGRLMVGRRWSDGLHQAVEAKEGVKIQHENQTLASITFQNYFRMYDKLSGMTGTADTEAYEFQEIYTLETVIIPTNKPMVRKDQNDQVFKTTQEKYQAILNDIRDCHERGQPVLVGTTSIENSELLAGLLRQAKLPHEVLNAKQHAREAEIVAEAGKPGHITIATNMAGRGTDIVLGGSVDKQVDLIHANEALSEAEKEARIETLRAEWKPLNERVKQAGGLRIIGTERHESRRIDNQLRGRAGRQGDPGSSRFYLSLEDPLMRIFAGDRVRAIMERLKLPEGEPIEAGMVTRSIETAQRKVEGRNFDIRKQLLEYDDVANDQRKVLYSQRNEVLEAASIGATVEGLRDAAVAEMFRGFIPEESVEEQWDVAGLEKALAGDWHIQLPLTDMLEQEPNLTDEELLERVVAAARQIYTAKVEQVGAESWAQFERSIMLQSIDTHWREHLSALDYLRQGIHLRGYAQKNPKQEYKREAFELFSGMLDRIRDDVVRVLMTVRVQSAEQVEQAEADAAQPHVQNVQYHHSDYDEALADDGQPQGAQPVRNVLPKVGRNEPCPCGSGKKYKHCHGQLA</sequence>
<dbReference type="EC" id="7.4.2.8" evidence="1"/>
<dbReference type="EMBL" id="BX640420">
    <property type="protein sequence ID" value="CAE43285.1"/>
    <property type="molecule type" value="Genomic_DNA"/>
</dbReference>
<dbReference type="RefSeq" id="NP_881589.1">
    <property type="nucleotide sequence ID" value="NC_002929.2"/>
</dbReference>
<dbReference type="RefSeq" id="WP_003814564.1">
    <property type="nucleotide sequence ID" value="NZ_CP039022.1"/>
</dbReference>
<dbReference type="SMR" id="Q7VUR2"/>
<dbReference type="STRING" id="257313.BP3014"/>
<dbReference type="PaxDb" id="257313-BP3014"/>
<dbReference type="GeneID" id="69602937"/>
<dbReference type="KEGG" id="bpe:BP3014"/>
<dbReference type="PATRIC" id="fig|257313.5.peg.3259"/>
<dbReference type="eggNOG" id="COG0653">
    <property type="taxonomic scope" value="Bacteria"/>
</dbReference>
<dbReference type="HOGENOM" id="CLU_005314_3_0_4"/>
<dbReference type="Proteomes" id="UP000002676">
    <property type="component" value="Chromosome"/>
</dbReference>
<dbReference type="GO" id="GO:0031522">
    <property type="term" value="C:cell envelope Sec protein transport complex"/>
    <property type="evidence" value="ECO:0007669"/>
    <property type="project" value="TreeGrafter"/>
</dbReference>
<dbReference type="GO" id="GO:0005829">
    <property type="term" value="C:cytosol"/>
    <property type="evidence" value="ECO:0007669"/>
    <property type="project" value="TreeGrafter"/>
</dbReference>
<dbReference type="GO" id="GO:0005886">
    <property type="term" value="C:plasma membrane"/>
    <property type="evidence" value="ECO:0007669"/>
    <property type="project" value="UniProtKB-SubCell"/>
</dbReference>
<dbReference type="GO" id="GO:0005524">
    <property type="term" value="F:ATP binding"/>
    <property type="evidence" value="ECO:0007669"/>
    <property type="project" value="UniProtKB-UniRule"/>
</dbReference>
<dbReference type="GO" id="GO:0046872">
    <property type="term" value="F:metal ion binding"/>
    <property type="evidence" value="ECO:0007669"/>
    <property type="project" value="UniProtKB-KW"/>
</dbReference>
<dbReference type="GO" id="GO:0008564">
    <property type="term" value="F:protein-exporting ATPase activity"/>
    <property type="evidence" value="ECO:0007669"/>
    <property type="project" value="UniProtKB-EC"/>
</dbReference>
<dbReference type="GO" id="GO:0065002">
    <property type="term" value="P:intracellular protein transmembrane transport"/>
    <property type="evidence" value="ECO:0007669"/>
    <property type="project" value="UniProtKB-UniRule"/>
</dbReference>
<dbReference type="GO" id="GO:0017038">
    <property type="term" value="P:protein import"/>
    <property type="evidence" value="ECO:0007669"/>
    <property type="project" value="InterPro"/>
</dbReference>
<dbReference type="GO" id="GO:0006605">
    <property type="term" value="P:protein targeting"/>
    <property type="evidence" value="ECO:0007669"/>
    <property type="project" value="UniProtKB-UniRule"/>
</dbReference>
<dbReference type="GO" id="GO:0043952">
    <property type="term" value="P:protein transport by the Sec complex"/>
    <property type="evidence" value="ECO:0007669"/>
    <property type="project" value="TreeGrafter"/>
</dbReference>
<dbReference type="CDD" id="cd17928">
    <property type="entry name" value="DEXDc_SecA"/>
    <property type="match status" value="1"/>
</dbReference>
<dbReference type="CDD" id="cd18803">
    <property type="entry name" value="SF2_C_secA"/>
    <property type="match status" value="1"/>
</dbReference>
<dbReference type="FunFam" id="3.40.50.300:FF:000113">
    <property type="entry name" value="Preprotein translocase subunit SecA"/>
    <property type="match status" value="1"/>
</dbReference>
<dbReference type="FunFam" id="3.90.1440.10:FF:000001">
    <property type="entry name" value="Preprotein translocase subunit SecA"/>
    <property type="match status" value="1"/>
</dbReference>
<dbReference type="FunFam" id="1.10.3060.10:FF:000003">
    <property type="entry name" value="Protein translocase subunit SecA"/>
    <property type="match status" value="1"/>
</dbReference>
<dbReference type="FunFam" id="3.40.50.300:FF:000334">
    <property type="entry name" value="Protein translocase subunit SecA"/>
    <property type="match status" value="1"/>
</dbReference>
<dbReference type="Gene3D" id="1.10.3060.10">
    <property type="entry name" value="Helical scaffold and wing domains of SecA"/>
    <property type="match status" value="1"/>
</dbReference>
<dbReference type="Gene3D" id="3.40.50.300">
    <property type="entry name" value="P-loop containing nucleotide triphosphate hydrolases"/>
    <property type="match status" value="2"/>
</dbReference>
<dbReference type="Gene3D" id="3.90.1440.10">
    <property type="entry name" value="SecA, preprotein cross-linking domain"/>
    <property type="match status" value="1"/>
</dbReference>
<dbReference type="HAMAP" id="MF_01382">
    <property type="entry name" value="SecA"/>
    <property type="match status" value="1"/>
</dbReference>
<dbReference type="InterPro" id="IPR014001">
    <property type="entry name" value="Helicase_ATP-bd"/>
</dbReference>
<dbReference type="InterPro" id="IPR001650">
    <property type="entry name" value="Helicase_C-like"/>
</dbReference>
<dbReference type="InterPro" id="IPR027417">
    <property type="entry name" value="P-loop_NTPase"/>
</dbReference>
<dbReference type="InterPro" id="IPR004027">
    <property type="entry name" value="SEC_C_motif"/>
</dbReference>
<dbReference type="InterPro" id="IPR000185">
    <property type="entry name" value="SecA"/>
</dbReference>
<dbReference type="InterPro" id="IPR020937">
    <property type="entry name" value="SecA_CS"/>
</dbReference>
<dbReference type="InterPro" id="IPR011115">
    <property type="entry name" value="SecA_DEAD"/>
</dbReference>
<dbReference type="InterPro" id="IPR014018">
    <property type="entry name" value="SecA_motor_DEAD"/>
</dbReference>
<dbReference type="InterPro" id="IPR011130">
    <property type="entry name" value="SecA_preprotein_X-link_dom"/>
</dbReference>
<dbReference type="InterPro" id="IPR044722">
    <property type="entry name" value="SecA_SF2_C"/>
</dbReference>
<dbReference type="InterPro" id="IPR011116">
    <property type="entry name" value="SecA_Wing/Scaffold"/>
</dbReference>
<dbReference type="InterPro" id="IPR036266">
    <property type="entry name" value="SecA_Wing/Scaffold_sf"/>
</dbReference>
<dbReference type="InterPro" id="IPR036670">
    <property type="entry name" value="SecA_X-link_sf"/>
</dbReference>
<dbReference type="NCBIfam" id="NF009538">
    <property type="entry name" value="PRK12904.1"/>
    <property type="match status" value="1"/>
</dbReference>
<dbReference type="NCBIfam" id="TIGR00963">
    <property type="entry name" value="secA"/>
    <property type="match status" value="1"/>
</dbReference>
<dbReference type="PANTHER" id="PTHR30612:SF0">
    <property type="entry name" value="CHLOROPLAST PROTEIN-TRANSPORTING ATPASE"/>
    <property type="match status" value="1"/>
</dbReference>
<dbReference type="PANTHER" id="PTHR30612">
    <property type="entry name" value="SECA INNER MEMBRANE COMPONENT OF SEC PROTEIN SECRETION SYSTEM"/>
    <property type="match status" value="1"/>
</dbReference>
<dbReference type="Pfam" id="PF21090">
    <property type="entry name" value="P-loop_SecA"/>
    <property type="match status" value="1"/>
</dbReference>
<dbReference type="Pfam" id="PF02810">
    <property type="entry name" value="SEC-C"/>
    <property type="match status" value="1"/>
</dbReference>
<dbReference type="Pfam" id="PF07517">
    <property type="entry name" value="SecA_DEAD"/>
    <property type="match status" value="1"/>
</dbReference>
<dbReference type="Pfam" id="PF01043">
    <property type="entry name" value="SecA_PP_bind"/>
    <property type="match status" value="1"/>
</dbReference>
<dbReference type="Pfam" id="PF07516">
    <property type="entry name" value="SecA_SW"/>
    <property type="match status" value="1"/>
</dbReference>
<dbReference type="PRINTS" id="PR00906">
    <property type="entry name" value="SECA"/>
</dbReference>
<dbReference type="SMART" id="SM00957">
    <property type="entry name" value="SecA_DEAD"/>
    <property type="match status" value="1"/>
</dbReference>
<dbReference type="SMART" id="SM00958">
    <property type="entry name" value="SecA_PP_bind"/>
    <property type="match status" value="1"/>
</dbReference>
<dbReference type="SUPFAM" id="SSF81886">
    <property type="entry name" value="Helical scaffold and wing domains of SecA"/>
    <property type="match status" value="1"/>
</dbReference>
<dbReference type="SUPFAM" id="SSF52540">
    <property type="entry name" value="P-loop containing nucleoside triphosphate hydrolases"/>
    <property type="match status" value="2"/>
</dbReference>
<dbReference type="SUPFAM" id="SSF81767">
    <property type="entry name" value="Pre-protein crosslinking domain of SecA"/>
    <property type="match status" value="1"/>
</dbReference>
<dbReference type="PROSITE" id="PS01312">
    <property type="entry name" value="SECA"/>
    <property type="match status" value="1"/>
</dbReference>
<dbReference type="PROSITE" id="PS51196">
    <property type="entry name" value="SECA_MOTOR_DEAD"/>
    <property type="match status" value="1"/>
</dbReference>
<feature type="chain" id="PRO_0000320741" description="Protein translocase subunit SecA">
    <location>
        <begin position="1"/>
        <end position="911"/>
    </location>
</feature>
<feature type="binding site" evidence="1">
    <location>
        <position position="86"/>
    </location>
    <ligand>
        <name>ATP</name>
        <dbReference type="ChEBI" id="CHEBI:30616"/>
    </ligand>
</feature>
<feature type="binding site" evidence="1">
    <location>
        <begin position="104"/>
        <end position="108"/>
    </location>
    <ligand>
        <name>ATP</name>
        <dbReference type="ChEBI" id="CHEBI:30616"/>
    </ligand>
</feature>
<feature type="binding site" evidence="1">
    <location>
        <position position="512"/>
    </location>
    <ligand>
        <name>ATP</name>
        <dbReference type="ChEBI" id="CHEBI:30616"/>
    </ligand>
</feature>
<feature type="binding site" evidence="1">
    <location>
        <position position="895"/>
    </location>
    <ligand>
        <name>Zn(2+)</name>
        <dbReference type="ChEBI" id="CHEBI:29105"/>
    </ligand>
</feature>
<feature type="binding site" evidence="1">
    <location>
        <position position="897"/>
    </location>
    <ligand>
        <name>Zn(2+)</name>
        <dbReference type="ChEBI" id="CHEBI:29105"/>
    </ligand>
</feature>
<feature type="binding site" evidence="1">
    <location>
        <position position="906"/>
    </location>
    <ligand>
        <name>Zn(2+)</name>
        <dbReference type="ChEBI" id="CHEBI:29105"/>
    </ligand>
</feature>
<feature type="binding site" evidence="1">
    <location>
        <position position="907"/>
    </location>
    <ligand>
        <name>Zn(2+)</name>
        <dbReference type="ChEBI" id="CHEBI:29105"/>
    </ligand>
</feature>
<accession>Q7VUR2</accession>
<proteinExistence type="inferred from homology"/>
<evidence type="ECO:0000255" key="1">
    <source>
        <dbReference type="HAMAP-Rule" id="MF_01382"/>
    </source>
</evidence>
<reference key="1">
    <citation type="journal article" date="2003" name="Nat. Genet.">
        <title>Comparative analysis of the genome sequences of Bordetella pertussis, Bordetella parapertussis and Bordetella bronchiseptica.</title>
        <authorList>
            <person name="Parkhill J."/>
            <person name="Sebaihia M."/>
            <person name="Preston A."/>
            <person name="Murphy L.D."/>
            <person name="Thomson N.R."/>
            <person name="Harris D.E."/>
            <person name="Holden M.T.G."/>
            <person name="Churcher C.M."/>
            <person name="Bentley S.D."/>
            <person name="Mungall K.L."/>
            <person name="Cerdeno-Tarraga A.-M."/>
            <person name="Temple L."/>
            <person name="James K.D."/>
            <person name="Harris B."/>
            <person name="Quail M.A."/>
            <person name="Achtman M."/>
            <person name="Atkin R."/>
            <person name="Baker S."/>
            <person name="Basham D."/>
            <person name="Bason N."/>
            <person name="Cherevach I."/>
            <person name="Chillingworth T."/>
            <person name="Collins M."/>
            <person name="Cronin A."/>
            <person name="Davis P."/>
            <person name="Doggett J."/>
            <person name="Feltwell T."/>
            <person name="Goble A."/>
            <person name="Hamlin N."/>
            <person name="Hauser H."/>
            <person name="Holroyd S."/>
            <person name="Jagels K."/>
            <person name="Leather S."/>
            <person name="Moule S."/>
            <person name="Norberczak H."/>
            <person name="O'Neil S."/>
            <person name="Ormond D."/>
            <person name="Price C."/>
            <person name="Rabbinowitsch E."/>
            <person name="Rutter S."/>
            <person name="Sanders M."/>
            <person name="Saunders D."/>
            <person name="Seeger K."/>
            <person name="Sharp S."/>
            <person name="Simmonds M."/>
            <person name="Skelton J."/>
            <person name="Squares R."/>
            <person name="Squares S."/>
            <person name="Stevens K."/>
            <person name="Unwin L."/>
            <person name="Whitehead S."/>
            <person name="Barrell B.G."/>
            <person name="Maskell D.J."/>
        </authorList>
    </citation>
    <scope>NUCLEOTIDE SEQUENCE [LARGE SCALE GENOMIC DNA]</scope>
    <source>
        <strain>Tohama I / ATCC BAA-589 / NCTC 13251</strain>
    </source>
</reference>
<protein>
    <recommendedName>
        <fullName evidence="1">Protein translocase subunit SecA</fullName>
        <ecNumber evidence="1">7.4.2.8</ecNumber>
    </recommendedName>
</protein>
<keyword id="KW-0067">ATP-binding</keyword>
<keyword id="KW-0997">Cell inner membrane</keyword>
<keyword id="KW-1003">Cell membrane</keyword>
<keyword id="KW-0963">Cytoplasm</keyword>
<keyword id="KW-0472">Membrane</keyword>
<keyword id="KW-0479">Metal-binding</keyword>
<keyword id="KW-0547">Nucleotide-binding</keyword>
<keyword id="KW-0653">Protein transport</keyword>
<keyword id="KW-1185">Reference proteome</keyword>
<keyword id="KW-1278">Translocase</keyword>
<keyword id="KW-0811">Translocation</keyword>
<keyword id="KW-0813">Transport</keyword>
<keyword id="KW-0862">Zinc</keyword>
<name>SECA_BORPE</name>
<gene>
    <name evidence="1" type="primary">secA</name>
    <name type="ordered locus">BP3014</name>
</gene>
<comment type="function">
    <text evidence="1">Part of the Sec protein translocase complex. Interacts with the SecYEG preprotein conducting channel. Has a central role in coupling the hydrolysis of ATP to the transfer of proteins into and across the cell membrane, serving both as a receptor for the preprotein-SecB complex and as an ATP-driven molecular motor driving the stepwise translocation of polypeptide chains across the membrane.</text>
</comment>
<comment type="catalytic activity">
    <reaction evidence="1">
        <text>ATP + H2O + cellular proteinSide 1 = ADP + phosphate + cellular proteinSide 2.</text>
        <dbReference type="EC" id="7.4.2.8"/>
    </reaction>
</comment>
<comment type="cofactor">
    <cofactor evidence="1">
        <name>Zn(2+)</name>
        <dbReference type="ChEBI" id="CHEBI:29105"/>
    </cofactor>
    <text evidence="1">May bind 1 zinc ion per subunit.</text>
</comment>
<comment type="subunit">
    <text evidence="1">Monomer and homodimer. Part of the essential Sec protein translocation apparatus which comprises SecA, SecYEG and auxiliary proteins SecDF-YajC and YidC.</text>
</comment>
<comment type="subcellular location">
    <subcellularLocation>
        <location evidence="1">Cell inner membrane</location>
        <topology evidence="1">Peripheral membrane protein</topology>
        <orientation evidence="1">Cytoplasmic side</orientation>
    </subcellularLocation>
    <subcellularLocation>
        <location evidence="1">Cytoplasm</location>
    </subcellularLocation>
    <text evidence="1">Distribution is 50-50.</text>
</comment>
<comment type="similarity">
    <text evidence="1">Belongs to the SecA family.</text>
</comment>